<reference key="1">
    <citation type="journal article" date="2011" name="J. Bacteriol.">
        <title>Whole-genome sequences of thirteen isolates of Borrelia burgdorferi.</title>
        <authorList>
            <person name="Schutzer S.E."/>
            <person name="Fraser-Liggett C.M."/>
            <person name="Casjens S.R."/>
            <person name="Qiu W.G."/>
            <person name="Dunn J.J."/>
            <person name="Mongodin E.F."/>
            <person name="Luft B.J."/>
        </authorList>
    </citation>
    <scope>NUCLEOTIDE SEQUENCE [LARGE SCALE GENOMIC DNA]</scope>
    <source>
        <strain>ZS7</strain>
    </source>
</reference>
<comment type="catalytic activity">
    <reaction evidence="1">
        <text>CMP + ATP = CDP + ADP</text>
        <dbReference type="Rhea" id="RHEA:11600"/>
        <dbReference type="ChEBI" id="CHEBI:30616"/>
        <dbReference type="ChEBI" id="CHEBI:58069"/>
        <dbReference type="ChEBI" id="CHEBI:60377"/>
        <dbReference type="ChEBI" id="CHEBI:456216"/>
        <dbReference type="EC" id="2.7.4.25"/>
    </reaction>
</comment>
<comment type="catalytic activity">
    <reaction evidence="1">
        <text>dCMP + ATP = dCDP + ADP</text>
        <dbReference type="Rhea" id="RHEA:25094"/>
        <dbReference type="ChEBI" id="CHEBI:30616"/>
        <dbReference type="ChEBI" id="CHEBI:57566"/>
        <dbReference type="ChEBI" id="CHEBI:58593"/>
        <dbReference type="ChEBI" id="CHEBI:456216"/>
        <dbReference type="EC" id="2.7.4.25"/>
    </reaction>
</comment>
<comment type="subcellular location">
    <subcellularLocation>
        <location evidence="1">Cytoplasm</location>
    </subcellularLocation>
</comment>
<comment type="similarity">
    <text evidence="1">Belongs to the cytidylate kinase family. Type 1 subfamily.</text>
</comment>
<organism>
    <name type="scientific">Borreliella burgdorferi (strain ZS7)</name>
    <name type="common">Borrelia burgdorferi</name>
    <dbReference type="NCBI Taxonomy" id="445985"/>
    <lineage>
        <taxon>Bacteria</taxon>
        <taxon>Pseudomonadati</taxon>
        <taxon>Spirochaetota</taxon>
        <taxon>Spirochaetia</taxon>
        <taxon>Spirochaetales</taxon>
        <taxon>Borreliaceae</taxon>
        <taxon>Borreliella</taxon>
    </lineage>
</organism>
<evidence type="ECO:0000255" key="1">
    <source>
        <dbReference type="HAMAP-Rule" id="MF_00238"/>
    </source>
</evidence>
<gene>
    <name evidence="1" type="primary">cmk</name>
    <name type="ordered locus">BbuZS7_0128</name>
</gene>
<feature type="chain" id="PRO_1000119011" description="Cytidylate kinase">
    <location>
        <begin position="1"/>
        <end position="221"/>
    </location>
</feature>
<feature type="binding site" evidence="1">
    <location>
        <begin position="7"/>
        <end position="15"/>
    </location>
    <ligand>
        <name>ATP</name>
        <dbReference type="ChEBI" id="CHEBI:30616"/>
    </ligand>
</feature>
<accession>B7J161</accession>
<protein>
    <recommendedName>
        <fullName evidence="1">Cytidylate kinase</fullName>
        <shortName evidence="1">CK</shortName>
        <ecNumber evidence="1">2.7.4.25</ecNumber>
    </recommendedName>
    <alternativeName>
        <fullName evidence="1">Cytidine monophosphate kinase</fullName>
        <shortName evidence="1">CMP kinase</shortName>
    </alternativeName>
</protein>
<dbReference type="EC" id="2.7.4.25" evidence="1"/>
<dbReference type="EMBL" id="CP001205">
    <property type="protein sequence ID" value="ACK74903.1"/>
    <property type="molecule type" value="Genomic_DNA"/>
</dbReference>
<dbReference type="RefSeq" id="WP_002658217.1">
    <property type="nucleotide sequence ID" value="NC_011728.1"/>
</dbReference>
<dbReference type="SMR" id="B7J161"/>
<dbReference type="GeneID" id="56568090"/>
<dbReference type="KEGG" id="bbz:BbuZS7_0128"/>
<dbReference type="HOGENOM" id="CLU_079959_0_2_12"/>
<dbReference type="Proteomes" id="UP000006901">
    <property type="component" value="Chromosome"/>
</dbReference>
<dbReference type="GO" id="GO:0005737">
    <property type="term" value="C:cytoplasm"/>
    <property type="evidence" value="ECO:0007669"/>
    <property type="project" value="UniProtKB-SubCell"/>
</dbReference>
<dbReference type="GO" id="GO:0005524">
    <property type="term" value="F:ATP binding"/>
    <property type="evidence" value="ECO:0007669"/>
    <property type="project" value="UniProtKB-UniRule"/>
</dbReference>
<dbReference type="GO" id="GO:0036430">
    <property type="term" value="F:CMP kinase activity"/>
    <property type="evidence" value="ECO:0007669"/>
    <property type="project" value="RHEA"/>
</dbReference>
<dbReference type="GO" id="GO:0036431">
    <property type="term" value="F:dCMP kinase activity"/>
    <property type="evidence" value="ECO:0007669"/>
    <property type="project" value="RHEA"/>
</dbReference>
<dbReference type="GO" id="GO:0006220">
    <property type="term" value="P:pyrimidine nucleotide metabolic process"/>
    <property type="evidence" value="ECO:0007669"/>
    <property type="project" value="UniProtKB-UniRule"/>
</dbReference>
<dbReference type="CDD" id="cd02020">
    <property type="entry name" value="CMPK"/>
    <property type="match status" value="1"/>
</dbReference>
<dbReference type="Gene3D" id="3.40.50.300">
    <property type="entry name" value="P-loop containing nucleotide triphosphate hydrolases"/>
    <property type="match status" value="1"/>
</dbReference>
<dbReference type="HAMAP" id="MF_00238">
    <property type="entry name" value="Cytidyl_kinase_type1"/>
    <property type="match status" value="1"/>
</dbReference>
<dbReference type="InterPro" id="IPR003136">
    <property type="entry name" value="Cytidylate_kin"/>
</dbReference>
<dbReference type="InterPro" id="IPR011994">
    <property type="entry name" value="Cytidylate_kinase_dom"/>
</dbReference>
<dbReference type="InterPro" id="IPR027417">
    <property type="entry name" value="P-loop_NTPase"/>
</dbReference>
<dbReference type="NCBIfam" id="TIGR00017">
    <property type="entry name" value="cmk"/>
    <property type="match status" value="1"/>
</dbReference>
<dbReference type="Pfam" id="PF02224">
    <property type="entry name" value="Cytidylate_kin"/>
    <property type="match status" value="1"/>
</dbReference>
<dbReference type="SUPFAM" id="SSF52540">
    <property type="entry name" value="P-loop containing nucleoside triphosphate hydrolases"/>
    <property type="match status" value="1"/>
</dbReference>
<keyword id="KW-0067">ATP-binding</keyword>
<keyword id="KW-0963">Cytoplasm</keyword>
<keyword id="KW-0418">Kinase</keyword>
<keyword id="KW-0547">Nucleotide-binding</keyword>
<keyword id="KW-0808">Transferase</keyword>
<name>KCY_BORBZ</name>
<sequence>MIIAIDGPSASGKSSIARELGVRLNYKFISSGHLYRIITLIAQRSLMNSCDFISEDSLLNLILENDISFNNSTFLLNGENVENQILNDKIDFQVSFYSSYVGIRNIVNKKLREVVKFSDDNYIIEGRDITTVVFPESEFKIYLDASVKVRALRRYKQRNGNETLEELERTLKRRDDVDKKKQYGKLKLSKGVFYLDTSYKGLDDVCNIIIEKFNLKKVRER</sequence>
<proteinExistence type="inferred from homology"/>